<dbReference type="EC" id="7.1.1.-" evidence="1"/>
<dbReference type="EMBL" id="DQ226511">
    <property type="protein sequence ID" value="ABB20963.1"/>
    <property type="molecule type" value="Genomic_DNA"/>
</dbReference>
<dbReference type="RefSeq" id="YP_762266.1">
    <property type="nucleotide sequence ID" value="NC_008359.1"/>
</dbReference>
<dbReference type="SMR" id="Q09X12"/>
<dbReference type="GeneID" id="4290578"/>
<dbReference type="GO" id="GO:0009535">
    <property type="term" value="C:chloroplast thylakoid membrane"/>
    <property type="evidence" value="ECO:0007669"/>
    <property type="project" value="UniProtKB-SubCell"/>
</dbReference>
<dbReference type="GO" id="GO:0030964">
    <property type="term" value="C:NADH dehydrogenase complex"/>
    <property type="evidence" value="ECO:0007669"/>
    <property type="project" value="TreeGrafter"/>
</dbReference>
<dbReference type="GO" id="GO:0008137">
    <property type="term" value="F:NADH dehydrogenase (ubiquinone) activity"/>
    <property type="evidence" value="ECO:0007669"/>
    <property type="project" value="InterPro"/>
</dbReference>
<dbReference type="GO" id="GO:0048038">
    <property type="term" value="F:quinone binding"/>
    <property type="evidence" value="ECO:0007669"/>
    <property type="project" value="UniProtKB-KW"/>
</dbReference>
<dbReference type="GO" id="GO:0019684">
    <property type="term" value="P:photosynthesis, light reaction"/>
    <property type="evidence" value="ECO:0007669"/>
    <property type="project" value="UniProtKB-UniRule"/>
</dbReference>
<dbReference type="FunFam" id="1.20.58.1610:FF:000001">
    <property type="entry name" value="NAD(P)H-quinone oxidoreductase subunit 3, chloroplastic"/>
    <property type="match status" value="1"/>
</dbReference>
<dbReference type="Gene3D" id="1.20.58.1610">
    <property type="entry name" value="NADH:ubiquinone/plastoquinone oxidoreductase, chain 3"/>
    <property type="match status" value="1"/>
</dbReference>
<dbReference type="HAMAP" id="MF_01394">
    <property type="entry name" value="NDH1_NuoA"/>
    <property type="match status" value="1"/>
</dbReference>
<dbReference type="InterPro" id="IPR023043">
    <property type="entry name" value="NAD(P)H_OxRDtase_bac/plastid"/>
</dbReference>
<dbReference type="InterPro" id="IPR000440">
    <property type="entry name" value="NADH_UbQ/plastoQ_OxRdtase_su3"/>
</dbReference>
<dbReference type="InterPro" id="IPR038430">
    <property type="entry name" value="NDAH_ubi_oxred_su3_sf"/>
</dbReference>
<dbReference type="PANTHER" id="PTHR11058">
    <property type="entry name" value="NADH-UBIQUINONE OXIDOREDUCTASE CHAIN 3"/>
    <property type="match status" value="1"/>
</dbReference>
<dbReference type="PANTHER" id="PTHR11058:SF9">
    <property type="entry name" value="NADH-UBIQUINONE OXIDOREDUCTASE CHAIN 3"/>
    <property type="match status" value="1"/>
</dbReference>
<dbReference type="Pfam" id="PF00507">
    <property type="entry name" value="Oxidored_q4"/>
    <property type="match status" value="1"/>
</dbReference>
<evidence type="ECO:0000255" key="1">
    <source>
        <dbReference type="HAMAP-Rule" id="MF_01394"/>
    </source>
</evidence>
<gene>
    <name evidence="1" type="primary">ndhC</name>
    <name type="ordered locus">MoinCp026</name>
</gene>
<accession>Q09X12</accession>
<protein>
    <recommendedName>
        <fullName evidence="1">NAD(P)H-quinone oxidoreductase subunit 3, chloroplastic</fullName>
        <ecNumber evidence="1">7.1.1.-</ecNumber>
    </recommendedName>
    <alternativeName>
        <fullName evidence="1">NAD(P)H dehydrogenase subunit 3</fullName>
    </alternativeName>
    <alternativeName>
        <fullName evidence="1">NADH-plastoquinone oxidoreductase subunit 3</fullName>
    </alternativeName>
</protein>
<name>NU3C_MORIN</name>
<reference key="1">
    <citation type="submission" date="2005-09" db="EMBL/GenBank/DDBJ databases">
        <title>The chloroplast genome of mulberry: structural features and comparative analysis.</title>
        <authorList>
            <person name="Ravi V."/>
            <person name="Khurana J.P."/>
            <person name="Tyagi A.K."/>
            <person name="Khurana P."/>
        </authorList>
    </citation>
    <scope>NUCLEOTIDE SEQUENCE [LARGE SCALE GENOMIC DNA]</scope>
    <source>
        <strain>K2</strain>
    </source>
</reference>
<proteinExistence type="inferred from homology"/>
<comment type="function">
    <text evidence="1">NDH shuttles electrons from NAD(P)H:plastoquinone, via FMN and iron-sulfur (Fe-S) centers, to quinones in the photosynthetic chain and possibly in a chloroplast respiratory chain. The immediate electron acceptor for the enzyme in this species is believed to be plastoquinone. Couples the redox reaction to proton translocation, and thus conserves the redox energy in a proton gradient.</text>
</comment>
<comment type="catalytic activity">
    <reaction evidence="1">
        <text>a plastoquinone + NADH + (n+1) H(+)(in) = a plastoquinol + NAD(+) + n H(+)(out)</text>
        <dbReference type="Rhea" id="RHEA:42608"/>
        <dbReference type="Rhea" id="RHEA-COMP:9561"/>
        <dbReference type="Rhea" id="RHEA-COMP:9562"/>
        <dbReference type="ChEBI" id="CHEBI:15378"/>
        <dbReference type="ChEBI" id="CHEBI:17757"/>
        <dbReference type="ChEBI" id="CHEBI:57540"/>
        <dbReference type="ChEBI" id="CHEBI:57945"/>
        <dbReference type="ChEBI" id="CHEBI:62192"/>
    </reaction>
</comment>
<comment type="catalytic activity">
    <reaction evidence="1">
        <text>a plastoquinone + NADPH + (n+1) H(+)(in) = a plastoquinol + NADP(+) + n H(+)(out)</text>
        <dbReference type="Rhea" id="RHEA:42612"/>
        <dbReference type="Rhea" id="RHEA-COMP:9561"/>
        <dbReference type="Rhea" id="RHEA-COMP:9562"/>
        <dbReference type="ChEBI" id="CHEBI:15378"/>
        <dbReference type="ChEBI" id="CHEBI:17757"/>
        <dbReference type="ChEBI" id="CHEBI:57783"/>
        <dbReference type="ChEBI" id="CHEBI:58349"/>
        <dbReference type="ChEBI" id="CHEBI:62192"/>
    </reaction>
</comment>
<comment type="subunit">
    <text evidence="1">NDH is composed of at least 16 different subunits, 5 of which are encoded in the nucleus.</text>
</comment>
<comment type="subcellular location">
    <subcellularLocation>
        <location evidence="1">Plastid</location>
        <location evidence="1">Chloroplast thylakoid membrane</location>
        <topology evidence="1">Multi-pass membrane protein</topology>
    </subcellularLocation>
</comment>
<comment type="similarity">
    <text evidence="1">Belongs to the complex I subunit 3 family.</text>
</comment>
<keyword id="KW-0150">Chloroplast</keyword>
<keyword id="KW-0472">Membrane</keyword>
<keyword id="KW-0520">NAD</keyword>
<keyword id="KW-0521">NADP</keyword>
<keyword id="KW-0934">Plastid</keyword>
<keyword id="KW-0618">Plastoquinone</keyword>
<keyword id="KW-0874">Quinone</keyword>
<keyword id="KW-0793">Thylakoid</keyword>
<keyword id="KW-1278">Translocase</keyword>
<keyword id="KW-0812">Transmembrane</keyword>
<keyword id="KW-1133">Transmembrane helix</keyword>
<keyword id="KW-0813">Transport</keyword>
<organism>
    <name type="scientific">Morus indica</name>
    <name type="common">Mulberry</name>
    <dbReference type="NCBI Taxonomy" id="248361"/>
    <lineage>
        <taxon>Eukaryota</taxon>
        <taxon>Viridiplantae</taxon>
        <taxon>Streptophyta</taxon>
        <taxon>Embryophyta</taxon>
        <taxon>Tracheophyta</taxon>
        <taxon>Spermatophyta</taxon>
        <taxon>Magnoliopsida</taxon>
        <taxon>eudicotyledons</taxon>
        <taxon>Gunneridae</taxon>
        <taxon>Pentapetalae</taxon>
        <taxon>rosids</taxon>
        <taxon>fabids</taxon>
        <taxon>Rosales</taxon>
        <taxon>Moraceae</taxon>
        <taxon>Moreae</taxon>
        <taxon>Morus</taxon>
    </lineage>
</organism>
<geneLocation type="chloroplast"/>
<feature type="chain" id="PRO_0000362850" description="NAD(P)H-quinone oxidoreductase subunit 3, chloroplastic">
    <location>
        <begin position="1"/>
        <end position="120"/>
    </location>
</feature>
<feature type="transmembrane region" description="Helical" evidence="1">
    <location>
        <begin position="9"/>
        <end position="29"/>
    </location>
</feature>
<feature type="transmembrane region" description="Helical" evidence="1">
    <location>
        <begin position="60"/>
        <end position="80"/>
    </location>
</feature>
<feature type="transmembrane region" description="Helical" evidence="1">
    <location>
        <begin position="88"/>
        <end position="108"/>
    </location>
</feature>
<sequence>MFLLYEYDIFWAFLIISSVIPIFAFIISGVLAPISKGPEKLSSYESGIEPMGDAWLQFRICYYMFALVFVVFDVETVFLYPWAMSFDILGVSVFIEALIFVLILIVGSIYAWRKGALEWS</sequence>